<feature type="chain" id="PRO_0000307875" description="Sperm motility kinase X">
    <location>
        <begin position="1"/>
        <end position="640"/>
    </location>
</feature>
<feature type="domain" description="Protein kinase" evidence="2">
    <location>
        <begin position="24"/>
        <end position="271"/>
    </location>
</feature>
<feature type="domain" description="UBA">
    <location>
        <begin position="289"/>
        <end position="329"/>
    </location>
</feature>
<feature type="region of interest" description="Disordered" evidence="4">
    <location>
        <begin position="359"/>
        <end position="399"/>
    </location>
</feature>
<feature type="region of interest" description="Disordered" evidence="4">
    <location>
        <begin position="464"/>
        <end position="509"/>
    </location>
</feature>
<feature type="region of interest" description="Disordered" evidence="4">
    <location>
        <begin position="531"/>
        <end position="576"/>
    </location>
</feature>
<feature type="region of interest" description="Disordered" evidence="4">
    <location>
        <begin position="617"/>
        <end position="640"/>
    </location>
</feature>
<feature type="compositionally biased region" description="Polar residues" evidence="4">
    <location>
        <begin position="359"/>
        <end position="381"/>
    </location>
</feature>
<feature type="compositionally biased region" description="Polar residues" evidence="4">
    <location>
        <begin position="390"/>
        <end position="399"/>
    </location>
</feature>
<feature type="compositionally biased region" description="Low complexity" evidence="4">
    <location>
        <begin position="470"/>
        <end position="481"/>
    </location>
</feature>
<feature type="active site" description="Proton acceptor" evidence="2 3">
    <location>
        <position position="142"/>
    </location>
</feature>
<feature type="binding site" evidence="2">
    <location>
        <begin position="30"/>
        <end position="38"/>
    </location>
    <ligand>
        <name>ATP</name>
        <dbReference type="ChEBI" id="CHEBI:30616"/>
    </ligand>
</feature>
<feature type="binding site" evidence="2">
    <location>
        <position position="53"/>
    </location>
    <ligand>
        <name>ATP</name>
        <dbReference type="ChEBI" id="CHEBI:30616"/>
    </ligand>
</feature>
<organism>
    <name type="scientific">Mus musculus</name>
    <name type="common">Mouse</name>
    <dbReference type="NCBI Taxonomy" id="10090"/>
    <lineage>
        <taxon>Eukaryota</taxon>
        <taxon>Metazoa</taxon>
        <taxon>Chordata</taxon>
        <taxon>Craniata</taxon>
        <taxon>Vertebrata</taxon>
        <taxon>Euteleostomi</taxon>
        <taxon>Mammalia</taxon>
        <taxon>Eutheria</taxon>
        <taxon>Euarchontoglires</taxon>
        <taxon>Glires</taxon>
        <taxon>Rodentia</taxon>
        <taxon>Myomorpha</taxon>
        <taxon>Muroidea</taxon>
        <taxon>Muridae</taxon>
        <taxon>Murinae</taxon>
        <taxon>Mus</taxon>
        <taxon>Mus</taxon>
    </lineage>
</organism>
<protein>
    <recommendedName>
        <fullName>Sperm motility kinase X</fullName>
        <ecNumber>2.7.11.1</ecNumber>
    </recommendedName>
</protein>
<accession>Q8C0X8</accession>
<proteinExistence type="evidence at transcript level"/>
<keyword id="KW-0067">ATP-binding</keyword>
<keyword id="KW-0418">Kinase</keyword>
<keyword id="KW-0547">Nucleotide-binding</keyword>
<keyword id="KW-1185">Reference proteome</keyword>
<keyword id="KW-0723">Serine/threonine-protein kinase</keyword>
<keyword id="KW-0808">Transferase</keyword>
<name>SMKX_MOUSE</name>
<dbReference type="EC" id="2.7.11.1"/>
<dbReference type="EMBL" id="AK029504">
    <property type="protein sequence ID" value="BAC26481.1"/>
    <property type="molecule type" value="mRNA"/>
</dbReference>
<dbReference type="EMBL" id="AL928719">
    <property type="status" value="NOT_ANNOTATED_CDS"/>
    <property type="molecule type" value="Genomic_DNA"/>
</dbReference>
<dbReference type="EMBL" id="BC119071">
    <property type="protein sequence ID" value="AAI19072.1"/>
    <property type="molecule type" value="mRNA"/>
</dbReference>
<dbReference type="EMBL" id="BC119073">
    <property type="protein sequence ID" value="AAI19074.1"/>
    <property type="molecule type" value="mRNA"/>
</dbReference>
<dbReference type="CCDS" id="CCDS38271.1"/>
<dbReference type="RefSeq" id="NP_941057.1">
    <property type="nucleotide sequence ID" value="NM_198655.2"/>
</dbReference>
<dbReference type="RefSeq" id="XP_006499881.1">
    <property type="nucleotide sequence ID" value="XM_006499818.2"/>
</dbReference>
<dbReference type="RefSeq" id="XP_006499882.1">
    <property type="nucleotide sequence ID" value="XM_006499819.3"/>
</dbReference>
<dbReference type="RefSeq" id="XP_006499883.1">
    <property type="nucleotide sequence ID" value="XM_006499820.2"/>
</dbReference>
<dbReference type="RefSeq" id="XP_036018235.1">
    <property type="nucleotide sequence ID" value="XM_036162342.1"/>
</dbReference>
<dbReference type="SMR" id="Q8C0X8"/>
<dbReference type="FunCoup" id="Q8C0X8">
    <property type="interactions" value="57"/>
</dbReference>
<dbReference type="STRING" id="10090.ENSMUSP00000079030"/>
<dbReference type="iPTMnet" id="Q8C0X8"/>
<dbReference type="PhosphoSitePlus" id="Q8C0X8"/>
<dbReference type="PaxDb" id="10090-ENSMUSP00000079030"/>
<dbReference type="DNASU" id="381393"/>
<dbReference type="Ensembl" id="ENSMUST00000080132.3">
    <property type="protein sequence ID" value="ENSMUSP00000079030.3"/>
    <property type="gene ID" value="ENSMUSG00000061525.3"/>
</dbReference>
<dbReference type="GeneID" id="381393"/>
<dbReference type="KEGG" id="mmu:381393"/>
<dbReference type="UCSC" id="uc008ndv.1">
    <property type="organism name" value="mouse"/>
</dbReference>
<dbReference type="AGR" id="MGI:2685851"/>
<dbReference type="MGI" id="MGI:2685851">
    <property type="gene designation" value="4921509C19Rik"/>
</dbReference>
<dbReference type="VEuPathDB" id="HostDB:ENSMUSG00000061525"/>
<dbReference type="eggNOG" id="KOG0586">
    <property type="taxonomic scope" value="Eukaryota"/>
</dbReference>
<dbReference type="GeneTree" id="ENSGT00940000160886"/>
<dbReference type="HOGENOM" id="CLU_000288_157_6_1"/>
<dbReference type="InParanoid" id="Q8C0X8"/>
<dbReference type="OMA" id="HLHGRRQ"/>
<dbReference type="OrthoDB" id="9583223at2759"/>
<dbReference type="PhylomeDB" id="Q8C0X8"/>
<dbReference type="TreeFam" id="TF338820"/>
<dbReference type="BioGRID-ORCS" id="381393">
    <property type="hits" value="3 hits in 43 CRISPR screens"/>
</dbReference>
<dbReference type="PRO" id="PR:Q8C0X8"/>
<dbReference type="Proteomes" id="UP000000589">
    <property type="component" value="Chromosome 2"/>
</dbReference>
<dbReference type="RNAct" id="Q8C0X8">
    <property type="molecule type" value="protein"/>
</dbReference>
<dbReference type="Bgee" id="ENSMUSG00000061525">
    <property type="expression patterns" value="Expressed in testis and 4 other cell types or tissues"/>
</dbReference>
<dbReference type="GO" id="GO:0005524">
    <property type="term" value="F:ATP binding"/>
    <property type="evidence" value="ECO:0007669"/>
    <property type="project" value="UniProtKB-KW"/>
</dbReference>
<dbReference type="GO" id="GO:0106310">
    <property type="term" value="F:protein serine kinase activity"/>
    <property type="evidence" value="ECO:0007669"/>
    <property type="project" value="RHEA"/>
</dbReference>
<dbReference type="GO" id="GO:0004674">
    <property type="term" value="F:protein serine/threonine kinase activity"/>
    <property type="evidence" value="ECO:0007669"/>
    <property type="project" value="UniProtKB-KW"/>
</dbReference>
<dbReference type="CDD" id="cd14003">
    <property type="entry name" value="STKc_AMPK-like"/>
    <property type="match status" value="1"/>
</dbReference>
<dbReference type="CDD" id="cd14337">
    <property type="entry name" value="UBA_MARK_Par1"/>
    <property type="match status" value="1"/>
</dbReference>
<dbReference type="FunFam" id="1.10.510.10:FF:000002">
    <property type="entry name" value="Non-specific serine/threonine protein kinase"/>
    <property type="match status" value="1"/>
</dbReference>
<dbReference type="FunFam" id="1.10.8.10:FF:000005">
    <property type="entry name" value="Non-specific serine/threonine protein kinase"/>
    <property type="match status" value="1"/>
</dbReference>
<dbReference type="FunFam" id="3.30.200.20:FF:000003">
    <property type="entry name" value="Non-specific serine/threonine protein kinase"/>
    <property type="match status" value="1"/>
</dbReference>
<dbReference type="Gene3D" id="1.10.8.10">
    <property type="entry name" value="DNA helicase RuvA subunit, C-terminal domain"/>
    <property type="match status" value="1"/>
</dbReference>
<dbReference type="Gene3D" id="3.30.200.20">
    <property type="entry name" value="Phosphorylase Kinase, domain 1"/>
    <property type="match status" value="1"/>
</dbReference>
<dbReference type="Gene3D" id="1.10.510.10">
    <property type="entry name" value="Transferase(Phosphotransferase) domain 1"/>
    <property type="match status" value="1"/>
</dbReference>
<dbReference type="InterPro" id="IPR011009">
    <property type="entry name" value="Kinase-like_dom_sf"/>
</dbReference>
<dbReference type="InterPro" id="IPR000719">
    <property type="entry name" value="Prot_kinase_dom"/>
</dbReference>
<dbReference type="InterPro" id="IPR017441">
    <property type="entry name" value="Protein_kinase_ATP_BS"/>
</dbReference>
<dbReference type="InterPro" id="IPR008271">
    <property type="entry name" value="Ser/Thr_kinase_AS"/>
</dbReference>
<dbReference type="PANTHER" id="PTHR24346">
    <property type="entry name" value="MAP/MICROTUBULE AFFINITY-REGULATING KINASE"/>
    <property type="match status" value="1"/>
</dbReference>
<dbReference type="PANTHER" id="PTHR24346:SF85">
    <property type="entry name" value="RIKEN CDNA 1810024B03 GENE"/>
    <property type="match status" value="1"/>
</dbReference>
<dbReference type="Pfam" id="PF00069">
    <property type="entry name" value="Pkinase"/>
    <property type="match status" value="1"/>
</dbReference>
<dbReference type="SMART" id="SM00220">
    <property type="entry name" value="S_TKc"/>
    <property type="match status" value="1"/>
</dbReference>
<dbReference type="SUPFAM" id="SSF56112">
    <property type="entry name" value="Protein kinase-like (PK-like)"/>
    <property type="match status" value="1"/>
</dbReference>
<dbReference type="PROSITE" id="PS00107">
    <property type="entry name" value="PROTEIN_KINASE_ATP"/>
    <property type="match status" value="1"/>
</dbReference>
<dbReference type="PROSITE" id="PS50011">
    <property type="entry name" value="PROTEIN_KINASE_DOM"/>
    <property type="match status" value="1"/>
</dbReference>
<dbReference type="PROSITE" id="PS00108">
    <property type="entry name" value="PROTEIN_KINASE_ST"/>
    <property type="match status" value="1"/>
</dbReference>
<comment type="function">
    <text evidence="1">May play a role in sperm motility, especially in the regulation of flagellar function.</text>
</comment>
<comment type="catalytic activity">
    <reaction>
        <text>L-seryl-[protein] + ATP = O-phospho-L-seryl-[protein] + ADP + H(+)</text>
        <dbReference type="Rhea" id="RHEA:17989"/>
        <dbReference type="Rhea" id="RHEA-COMP:9863"/>
        <dbReference type="Rhea" id="RHEA-COMP:11604"/>
        <dbReference type="ChEBI" id="CHEBI:15378"/>
        <dbReference type="ChEBI" id="CHEBI:29999"/>
        <dbReference type="ChEBI" id="CHEBI:30616"/>
        <dbReference type="ChEBI" id="CHEBI:83421"/>
        <dbReference type="ChEBI" id="CHEBI:456216"/>
        <dbReference type="EC" id="2.7.11.1"/>
    </reaction>
</comment>
<comment type="catalytic activity">
    <reaction>
        <text>L-threonyl-[protein] + ATP = O-phospho-L-threonyl-[protein] + ADP + H(+)</text>
        <dbReference type="Rhea" id="RHEA:46608"/>
        <dbReference type="Rhea" id="RHEA-COMP:11060"/>
        <dbReference type="Rhea" id="RHEA-COMP:11605"/>
        <dbReference type="ChEBI" id="CHEBI:15378"/>
        <dbReference type="ChEBI" id="CHEBI:30013"/>
        <dbReference type="ChEBI" id="CHEBI:30616"/>
        <dbReference type="ChEBI" id="CHEBI:61977"/>
        <dbReference type="ChEBI" id="CHEBI:456216"/>
        <dbReference type="EC" id="2.7.11.1"/>
    </reaction>
</comment>
<comment type="similarity">
    <text evidence="5">Belongs to the protein kinase superfamily. CAMK Ser/Thr protein kinase family. Smok subfamily.</text>
</comment>
<reference key="1">
    <citation type="journal article" date="2005" name="Science">
        <title>The transcriptional landscape of the mammalian genome.</title>
        <authorList>
            <person name="Carninci P."/>
            <person name="Kasukawa T."/>
            <person name="Katayama S."/>
            <person name="Gough J."/>
            <person name="Frith M.C."/>
            <person name="Maeda N."/>
            <person name="Oyama R."/>
            <person name="Ravasi T."/>
            <person name="Lenhard B."/>
            <person name="Wells C."/>
            <person name="Kodzius R."/>
            <person name="Shimokawa K."/>
            <person name="Bajic V.B."/>
            <person name="Brenner S.E."/>
            <person name="Batalov S."/>
            <person name="Forrest A.R."/>
            <person name="Zavolan M."/>
            <person name="Davis M.J."/>
            <person name="Wilming L.G."/>
            <person name="Aidinis V."/>
            <person name="Allen J.E."/>
            <person name="Ambesi-Impiombato A."/>
            <person name="Apweiler R."/>
            <person name="Aturaliya R.N."/>
            <person name="Bailey T.L."/>
            <person name="Bansal M."/>
            <person name="Baxter L."/>
            <person name="Beisel K.W."/>
            <person name="Bersano T."/>
            <person name="Bono H."/>
            <person name="Chalk A.M."/>
            <person name="Chiu K.P."/>
            <person name="Choudhary V."/>
            <person name="Christoffels A."/>
            <person name="Clutterbuck D.R."/>
            <person name="Crowe M.L."/>
            <person name="Dalla E."/>
            <person name="Dalrymple B.P."/>
            <person name="de Bono B."/>
            <person name="Della Gatta G."/>
            <person name="di Bernardo D."/>
            <person name="Down T."/>
            <person name="Engstrom P."/>
            <person name="Fagiolini M."/>
            <person name="Faulkner G."/>
            <person name="Fletcher C.F."/>
            <person name="Fukushima T."/>
            <person name="Furuno M."/>
            <person name="Futaki S."/>
            <person name="Gariboldi M."/>
            <person name="Georgii-Hemming P."/>
            <person name="Gingeras T.R."/>
            <person name="Gojobori T."/>
            <person name="Green R.E."/>
            <person name="Gustincich S."/>
            <person name="Harbers M."/>
            <person name="Hayashi Y."/>
            <person name="Hensch T.K."/>
            <person name="Hirokawa N."/>
            <person name="Hill D."/>
            <person name="Huminiecki L."/>
            <person name="Iacono M."/>
            <person name="Ikeo K."/>
            <person name="Iwama A."/>
            <person name="Ishikawa T."/>
            <person name="Jakt M."/>
            <person name="Kanapin A."/>
            <person name="Katoh M."/>
            <person name="Kawasawa Y."/>
            <person name="Kelso J."/>
            <person name="Kitamura H."/>
            <person name="Kitano H."/>
            <person name="Kollias G."/>
            <person name="Krishnan S.P."/>
            <person name="Kruger A."/>
            <person name="Kummerfeld S.K."/>
            <person name="Kurochkin I.V."/>
            <person name="Lareau L.F."/>
            <person name="Lazarevic D."/>
            <person name="Lipovich L."/>
            <person name="Liu J."/>
            <person name="Liuni S."/>
            <person name="McWilliam S."/>
            <person name="Madan Babu M."/>
            <person name="Madera M."/>
            <person name="Marchionni L."/>
            <person name="Matsuda H."/>
            <person name="Matsuzawa S."/>
            <person name="Miki H."/>
            <person name="Mignone F."/>
            <person name="Miyake S."/>
            <person name="Morris K."/>
            <person name="Mottagui-Tabar S."/>
            <person name="Mulder N."/>
            <person name="Nakano N."/>
            <person name="Nakauchi H."/>
            <person name="Ng P."/>
            <person name="Nilsson R."/>
            <person name="Nishiguchi S."/>
            <person name="Nishikawa S."/>
            <person name="Nori F."/>
            <person name="Ohara O."/>
            <person name="Okazaki Y."/>
            <person name="Orlando V."/>
            <person name="Pang K.C."/>
            <person name="Pavan W.J."/>
            <person name="Pavesi G."/>
            <person name="Pesole G."/>
            <person name="Petrovsky N."/>
            <person name="Piazza S."/>
            <person name="Reed J."/>
            <person name="Reid J.F."/>
            <person name="Ring B.Z."/>
            <person name="Ringwald M."/>
            <person name="Rost B."/>
            <person name="Ruan Y."/>
            <person name="Salzberg S.L."/>
            <person name="Sandelin A."/>
            <person name="Schneider C."/>
            <person name="Schoenbach C."/>
            <person name="Sekiguchi K."/>
            <person name="Semple C.A."/>
            <person name="Seno S."/>
            <person name="Sessa L."/>
            <person name="Sheng Y."/>
            <person name="Shibata Y."/>
            <person name="Shimada H."/>
            <person name="Shimada K."/>
            <person name="Silva D."/>
            <person name="Sinclair B."/>
            <person name="Sperling S."/>
            <person name="Stupka E."/>
            <person name="Sugiura K."/>
            <person name="Sultana R."/>
            <person name="Takenaka Y."/>
            <person name="Taki K."/>
            <person name="Tammoja K."/>
            <person name="Tan S.L."/>
            <person name="Tang S."/>
            <person name="Taylor M.S."/>
            <person name="Tegner J."/>
            <person name="Teichmann S.A."/>
            <person name="Ueda H.R."/>
            <person name="van Nimwegen E."/>
            <person name="Verardo R."/>
            <person name="Wei C.L."/>
            <person name="Yagi K."/>
            <person name="Yamanishi H."/>
            <person name="Zabarovsky E."/>
            <person name="Zhu S."/>
            <person name="Zimmer A."/>
            <person name="Hide W."/>
            <person name="Bult C."/>
            <person name="Grimmond S.M."/>
            <person name="Teasdale R.D."/>
            <person name="Liu E.T."/>
            <person name="Brusic V."/>
            <person name="Quackenbush J."/>
            <person name="Wahlestedt C."/>
            <person name="Mattick J.S."/>
            <person name="Hume D.A."/>
            <person name="Kai C."/>
            <person name="Sasaki D."/>
            <person name="Tomaru Y."/>
            <person name="Fukuda S."/>
            <person name="Kanamori-Katayama M."/>
            <person name="Suzuki M."/>
            <person name="Aoki J."/>
            <person name="Arakawa T."/>
            <person name="Iida J."/>
            <person name="Imamura K."/>
            <person name="Itoh M."/>
            <person name="Kato T."/>
            <person name="Kawaji H."/>
            <person name="Kawagashira N."/>
            <person name="Kawashima T."/>
            <person name="Kojima M."/>
            <person name="Kondo S."/>
            <person name="Konno H."/>
            <person name="Nakano K."/>
            <person name="Ninomiya N."/>
            <person name="Nishio T."/>
            <person name="Okada M."/>
            <person name="Plessy C."/>
            <person name="Shibata K."/>
            <person name="Shiraki T."/>
            <person name="Suzuki S."/>
            <person name="Tagami M."/>
            <person name="Waki K."/>
            <person name="Watahiki A."/>
            <person name="Okamura-Oho Y."/>
            <person name="Suzuki H."/>
            <person name="Kawai J."/>
            <person name="Hayashizaki Y."/>
        </authorList>
    </citation>
    <scope>NUCLEOTIDE SEQUENCE [LARGE SCALE MRNA]</scope>
    <source>
        <strain>C57BL/6J</strain>
        <tissue>Testis</tissue>
    </source>
</reference>
<reference key="2">
    <citation type="journal article" date="2009" name="PLoS Biol.">
        <title>Lineage-specific biology revealed by a finished genome assembly of the mouse.</title>
        <authorList>
            <person name="Church D.M."/>
            <person name="Goodstadt L."/>
            <person name="Hillier L.W."/>
            <person name="Zody M.C."/>
            <person name="Goldstein S."/>
            <person name="She X."/>
            <person name="Bult C.J."/>
            <person name="Agarwala R."/>
            <person name="Cherry J.L."/>
            <person name="DiCuccio M."/>
            <person name="Hlavina W."/>
            <person name="Kapustin Y."/>
            <person name="Meric P."/>
            <person name="Maglott D."/>
            <person name="Birtle Z."/>
            <person name="Marques A.C."/>
            <person name="Graves T."/>
            <person name="Zhou S."/>
            <person name="Teague B."/>
            <person name="Potamousis K."/>
            <person name="Churas C."/>
            <person name="Place M."/>
            <person name="Herschleb J."/>
            <person name="Runnheim R."/>
            <person name="Forrest D."/>
            <person name="Amos-Landgraf J."/>
            <person name="Schwartz D.C."/>
            <person name="Cheng Z."/>
            <person name="Lindblad-Toh K."/>
            <person name="Eichler E.E."/>
            <person name="Ponting C.P."/>
        </authorList>
    </citation>
    <scope>NUCLEOTIDE SEQUENCE [LARGE SCALE GENOMIC DNA]</scope>
    <source>
        <strain>C57BL/6J</strain>
    </source>
</reference>
<reference key="3">
    <citation type="journal article" date="2004" name="Genome Res.">
        <title>The status, quality, and expansion of the NIH full-length cDNA project: the Mammalian Gene Collection (MGC).</title>
        <authorList>
            <consortium name="The MGC Project Team"/>
        </authorList>
    </citation>
    <scope>NUCLEOTIDE SEQUENCE [LARGE SCALE MRNA]</scope>
    <source>
        <tissue>Testis</tissue>
    </source>
</reference>
<sequence>MKRWQACQDLRSNTFEDAALTEHYEILTTLGQGTFGEVKLASHLVTQTKVAIKILPKSRKNSLVQPEIEIMKSLDHPHIIKLLHIIDTTRNIFIVLEHAVGGELMSRIEEFGYLAEVECHRLFKQLVYALQYCHEKGIVHRDLKPENILLDHRGNVKLTDFGLGTKIIMGQKLVTFCGTLPYCAPELFEDRGYDGRATDVWSLGVVLYFMATGCLPFNGYSYEAIKQKIIAGKYPRSFSLSPELWEVIAKLLTVNPGERPTVHDIARFKWLKPDNEASPASLGENIESHPDPSIMVLMGVMGYNPGEIRESLREKKFDQVMATYLMLKQQSAWENKTTKKPDPRLCDRMLRSTEPTIKNQTSVRRASSVPTHSTFSLPNESESLEKGKRTTMSHSMPPTRNCFNEETTPLHSICPQLVQKAHYRRSIWGETEISDTSEESSTGESLEHPSLKIHTLQTSMGVSKAGSTYSKSKGSSQCVSSHHTSVEEDQCEGTNISREINPPLSPVSPQENLMGQLHIVTTAGSMDIMNTQVTSPPFSRKEAKGEGPALQQRESRPSSPNTLQGHLHGRRQTVPQAPFQRRVWRTLRNGLIRGLRTLCCCLPIERRVHPTNNRDLAVSQKSHGGSHGIRAFRGTVLPEK</sequence>
<evidence type="ECO:0000250" key="1"/>
<evidence type="ECO:0000255" key="2">
    <source>
        <dbReference type="PROSITE-ProRule" id="PRU00159"/>
    </source>
</evidence>
<evidence type="ECO:0000255" key="3">
    <source>
        <dbReference type="PROSITE-ProRule" id="PRU10027"/>
    </source>
</evidence>
<evidence type="ECO:0000256" key="4">
    <source>
        <dbReference type="SAM" id="MobiDB-lite"/>
    </source>
</evidence>
<evidence type="ECO:0000305" key="5"/>